<organism>
    <name type="scientific">Xanthomonas oryzae pv. oryzae (strain MAFF 311018)</name>
    <dbReference type="NCBI Taxonomy" id="342109"/>
    <lineage>
        <taxon>Bacteria</taxon>
        <taxon>Pseudomonadati</taxon>
        <taxon>Pseudomonadota</taxon>
        <taxon>Gammaproteobacteria</taxon>
        <taxon>Lysobacterales</taxon>
        <taxon>Lysobacteraceae</taxon>
        <taxon>Xanthomonas</taxon>
    </lineage>
</organism>
<keyword id="KW-0687">Ribonucleoprotein</keyword>
<keyword id="KW-0689">Ribosomal protein</keyword>
<proteinExistence type="inferred from homology"/>
<accession>Q2NXC7</accession>
<dbReference type="EMBL" id="AP008229">
    <property type="protein sequence ID" value="BAE71050.1"/>
    <property type="molecule type" value="Genomic_DNA"/>
</dbReference>
<dbReference type="RefSeq" id="WP_002809459.1">
    <property type="nucleotide sequence ID" value="NC_007705.1"/>
</dbReference>
<dbReference type="SMR" id="Q2NXC7"/>
<dbReference type="GeneID" id="97512304"/>
<dbReference type="KEGG" id="xom:XOO4295"/>
<dbReference type="HOGENOM" id="CLU_064548_3_1_6"/>
<dbReference type="GO" id="GO:0022625">
    <property type="term" value="C:cytosolic large ribosomal subunit"/>
    <property type="evidence" value="ECO:0007669"/>
    <property type="project" value="TreeGrafter"/>
</dbReference>
<dbReference type="GO" id="GO:0003735">
    <property type="term" value="F:structural constituent of ribosome"/>
    <property type="evidence" value="ECO:0007669"/>
    <property type="project" value="InterPro"/>
</dbReference>
<dbReference type="GO" id="GO:0006412">
    <property type="term" value="P:translation"/>
    <property type="evidence" value="ECO:0007669"/>
    <property type="project" value="UniProtKB-UniRule"/>
</dbReference>
<dbReference type="FunFam" id="2.30.170.40:FF:000001">
    <property type="entry name" value="50S ribosomal protein L28"/>
    <property type="match status" value="1"/>
</dbReference>
<dbReference type="Gene3D" id="2.30.170.40">
    <property type="entry name" value="Ribosomal protein L28/L24"/>
    <property type="match status" value="1"/>
</dbReference>
<dbReference type="HAMAP" id="MF_00373">
    <property type="entry name" value="Ribosomal_bL28"/>
    <property type="match status" value="1"/>
</dbReference>
<dbReference type="InterPro" id="IPR026569">
    <property type="entry name" value="Ribosomal_bL28"/>
</dbReference>
<dbReference type="InterPro" id="IPR034704">
    <property type="entry name" value="Ribosomal_bL28/bL31-like_sf"/>
</dbReference>
<dbReference type="InterPro" id="IPR001383">
    <property type="entry name" value="Ribosomal_bL28_bact-type"/>
</dbReference>
<dbReference type="InterPro" id="IPR037147">
    <property type="entry name" value="Ribosomal_bL28_sf"/>
</dbReference>
<dbReference type="NCBIfam" id="TIGR00009">
    <property type="entry name" value="L28"/>
    <property type="match status" value="1"/>
</dbReference>
<dbReference type="PANTHER" id="PTHR13528">
    <property type="entry name" value="39S RIBOSOMAL PROTEIN L28, MITOCHONDRIAL"/>
    <property type="match status" value="1"/>
</dbReference>
<dbReference type="PANTHER" id="PTHR13528:SF2">
    <property type="entry name" value="LARGE RIBOSOMAL SUBUNIT PROTEIN BL28M"/>
    <property type="match status" value="1"/>
</dbReference>
<dbReference type="Pfam" id="PF00830">
    <property type="entry name" value="Ribosomal_L28"/>
    <property type="match status" value="1"/>
</dbReference>
<dbReference type="SUPFAM" id="SSF143800">
    <property type="entry name" value="L28p-like"/>
    <property type="match status" value="1"/>
</dbReference>
<reference key="1">
    <citation type="journal article" date="2005" name="Jpn. Agric. Res. Q.">
        <title>Genome sequence of Xanthomonas oryzae pv. oryzae suggests contribution of large numbers of effector genes and insertion sequences to its race diversity.</title>
        <authorList>
            <person name="Ochiai H."/>
            <person name="Inoue Y."/>
            <person name="Takeya M."/>
            <person name="Sasaki A."/>
            <person name="Kaku H."/>
        </authorList>
    </citation>
    <scope>NUCLEOTIDE SEQUENCE [LARGE SCALE GENOMIC DNA]</scope>
    <source>
        <strain>MAFF 311018</strain>
    </source>
</reference>
<evidence type="ECO:0000255" key="1">
    <source>
        <dbReference type="HAMAP-Rule" id="MF_00373"/>
    </source>
</evidence>
<evidence type="ECO:0000256" key="2">
    <source>
        <dbReference type="SAM" id="MobiDB-lite"/>
    </source>
</evidence>
<evidence type="ECO:0000305" key="3"/>
<sequence>MSRVCQVSGKRVQTGNNVSHANNRTRRRFLPNLHERRFWVASENRWVKLRVSAHALRTIDKNGIDAVLKELRARGEKV</sequence>
<feature type="chain" id="PRO_1000007403" description="Large ribosomal subunit protein bL28">
    <location>
        <begin position="1"/>
        <end position="78"/>
    </location>
</feature>
<feature type="region of interest" description="Disordered" evidence="2">
    <location>
        <begin position="1"/>
        <end position="23"/>
    </location>
</feature>
<feature type="compositionally biased region" description="Polar residues" evidence="2">
    <location>
        <begin position="11"/>
        <end position="22"/>
    </location>
</feature>
<name>RL28_XANOM</name>
<gene>
    <name evidence="1" type="primary">rpmB</name>
    <name type="ordered locus">XOO4295</name>
</gene>
<comment type="similarity">
    <text evidence="1">Belongs to the bacterial ribosomal protein bL28 family.</text>
</comment>
<protein>
    <recommendedName>
        <fullName evidence="1">Large ribosomal subunit protein bL28</fullName>
    </recommendedName>
    <alternativeName>
        <fullName evidence="3">50S ribosomal protein L28</fullName>
    </alternativeName>
</protein>